<dbReference type="EC" id="2.5.1.3" evidence="1"/>
<dbReference type="EMBL" id="AE017355">
    <property type="protein sequence ID" value="AAT61239.1"/>
    <property type="molecule type" value="Genomic_DNA"/>
</dbReference>
<dbReference type="RefSeq" id="WP_000086979.1">
    <property type="nucleotide sequence ID" value="NC_005957.1"/>
</dbReference>
<dbReference type="RefSeq" id="YP_034703.1">
    <property type="nucleotide sequence ID" value="NC_005957.1"/>
</dbReference>
<dbReference type="SMR" id="Q6HP17"/>
<dbReference type="KEGG" id="btk:BT9727_0353"/>
<dbReference type="PATRIC" id="fig|281309.8.peg.375"/>
<dbReference type="HOGENOM" id="CLU_018272_3_2_9"/>
<dbReference type="UniPathway" id="UPA00060">
    <property type="reaction ID" value="UER00141"/>
</dbReference>
<dbReference type="Proteomes" id="UP000001301">
    <property type="component" value="Chromosome"/>
</dbReference>
<dbReference type="GO" id="GO:0005737">
    <property type="term" value="C:cytoplasm"/>
    <property type="evidence" value="ECO:0007669"/>
    <property type="project" value="TreeGrafter"/>
</dbReference>
<dbReference type="GO" id="GO:0000287">
    <property type="term" value="F:magnesium ion binding"/>
    <property type="evidence" value="ECO:0007669"/>
    <property type="project" value="UniProtKB-UniRule"/>
</dbReference>
<dbReference type="GO" id="GO:0004789">
    <property type="term" value="F:thiamine-phosphate diphosphorylase activity"/>
    <property type="evidence" value="ECO:0007669"/>
    <property type="project" value="UniProtKB-UniRule"/>
</dbReference>
<dbReference type="GO" id="GO:0009228">
    <property type="term" value="P:thiamine biosynthetic process"/>
    <property type="evidence" value="ECO:0007669"/>
    <property type="project" value="UniProtKB-KW"/>
</dbReference>
<dbReference type="GO" id="GO:0009229">
    <property type="term" value="P:thiamine diphosphate biosynthetic process"/>
    <property type="evidence" value="ECO:0007669"/>
    <property type="project" value="UniProtKB-UniRule"/>
</dbReference>
<dbReference type="CDD" id="cd00564">
    <property type="entry name" value="TMP_TenI"/>
    <property type="match status" value="1"/>
</dbReference>
<dbReference type="FunFam" id="3.20.20.70:FF:000096">
    <property type="entry name" value="Thiamine-phosphate synthase"/>
    <property type="match status" value="1"/>
</dbReference>
<dbReference type="Gene3D" id="3.20.20.70">
    <property type="entry name" value="Aldolase class I"/>
    <property type="match status" value="1"/>
</dbReference>
<dbReference type="HAMAP" id="MF_00097">
    <property type="entry name" value="TMP_synthase"/>
    <property type="match status" value="1"/>
</dbReference>
<dbReference type="InterPro" id="IPR013785">
    <property type="entry name" value="Aldolase_TIM"/>
</dbReference>
<dbReference type="InterPro" id="IPR036206">
    <property type="entry name" value="ThiamineP_synth_sf"/>
</dbReference>
<dbReference type="InterPro" id="IPR022998">
    <property type="entry name" value="ThiamineP_synth_TenI"/>
</dbReference>
<dbReference type="InterPro" id="IPR034291">
    <property type="entry name" value="TMP_synthase"/>
</dbReference>
<dbReference type="NCBIfam" id="TIGR00693">
    <property type="entry name" value="thiE"/>
    <property type="match status" value="1"/>
</dbReference>
<dbReference type="PANTHER" id="PTHR20857">
    <property type="entry name" value="THIAMINE-PHOSPHATE PYROPHOSPHORYLASE"/>
    <property type="match status" value="1"/>
</dbReference>
<dbReference type="PANTHER" id="PTHR20857:SF15">
    <property type="entry name" value="THIAMINE-PHOSPHATE SYNTHASE"/>
    <property type="match status" value="1"/>
</dbReference>
<dbReference type="Pfam" id="PF02581">
    <property type="entry name" value="TMP-TENI"/>
    <property type="match status" value="1"/>
</dbReference>
<dbReference type="SUPFAM" id="SSF51391">
    <property type="entry name" value="Thiamin phosphate synthase"/>
    <property type="match status" value="1"/>
</dbReference>
<gene>
    <name evidence="1" type="primary">thiE</name>
    <name type="ordered locus">BT9727_0353</name>
</gene>
<proteinExistence type="inferred from homology"/>
<name>THIE_BACHK</name>
<feature type="chain" id="PRO_1000008127" description="Thiamine-phosphate synthase">
    <location>
        <begin position="1"/>
        <end position="219"/>
    </location>
</feature>
<feature type="binding site" evidence="1">
    <location>
        <begin position="44"/>
        <end position="48"/>
    </location>
    <ligand>
        <name>4-amino-2-methyl-5-(diphosphooxymethyl)pyrimidine</name>
        <dbReference type="ChEBI" id="CHEBI:57841"/>
    </ligand>
</feature>
<feature type="binding site" evidence="1">
    <location>
        <position position="79"/>
    </location>
    <ligand>
        <name>4-amino-2-methyl-5-(diphosphooxymethyl)pyrimidine</name>
        <dbReference type="ChEBI" id="CHEBI:57841"/>
    </ligand>
</feature>
<feature type="binding site" evidence="1">
    <location>
        <position position="80"/>
    </location>
    <ligand>
        <name>Mg(2+)</name>
        <dbReference type="ChEBI" id="CHEBI:18420"/>
    </ligand>
</feature>
<feature type="binding site" evidence="1">
    <location>
        <position position="99"/>
    </location>
    <ligand>
        <name>Mg(2+)</name>
        <dbReference type="ChEBI" id="CHEBI:18420"/>
    </ligand>
</feature>
<feature type="binding site" evidence="1">
    <location>
        <position position="117"/>
    </location>
    <ligand>
        <name>4-amino-2-methyl-5-(diphosphooxymethyl)pyrimidine</name>
        <dbReference type="ChEBI" id="CHEBI:57841"/>
    </ligand>
</feature>
<feature type="binding site" evidence="1">
    <location>
        <begin position="143"/>
        <end position="145"/>
    </location>
    <ligand>
        <name>2-[(2R,5Z)-2-carboxy-4-methylthiazol-5(2H)-ylidene]ethyl phosphate</name>
        <dbReference type="ChEBI" id="CHEBI:62899"/>
    </ligand>
</feature>
<feature type="binding site" evidence="1">
    <location>
        <position position="146"/>
    </location>
    <ligand>
        <name>4-amino-2-methyl-5-(diphosphooxymethyl)pyrimidine</name>
        <dbReference type="ChEBI" id="CHEBI:57841"/>
    </ligand>
</feature>
<feature type="binding site" evidence="1">
    <location>
        <position position="175"/>
    </location>
    <ligand>
        <name>2-[(2R,5Z)-2-carboxy-4-methylthiazol-5(2H)-ylidene]ethyl phosphate</name>
        <dbReference type="ChEBI" id="CHEBI:62899"/>
    </ligand>
</feature>
<feature type="binding site" evidence="1">
    <location>
        <begin position="195"/>
        <end position="196"/>
    </location>
    <ligand>
        <name>2-[(2R,5Z)-2-carboxy-4-methylthiazol-5(2H)-ylidene]ethyl phosphate</name>
        <dbReference type="ChEBI" id="CHEBI:62899"/>
    </ligand>
</feature>
<organism>
    <name type="scientific">Bacillus thuringiensis subsp. konkukian (strain 97-27)</name>
    <dbReference type="NCBI Taxonomy" id="281309"/>
    <lineage>
        <taxon>Bacteria</taxon>
        <taxon>Bacillati</taxon>
        <taxon>Bacillota</taxon>
        <taxon>Bacilli</taxon>
        <taxon>Bacillales</taxon>
        <taxon>Bacillaceae</taxon>
        <taxon>Bacillus</taxon>
        <taxon>Bacillus cereus group</taxon>
    </lineage>
</organism>
<reference key="1">
    <citation type="journal article" date="2006" name="J. Bacteriol.">
        <title>Pathogenomic sequence analysis of Bacillus cereus and Bacillus thuringiensis isolates closely related to Bacillus anthracis.</title>
        <authorList>
            <person name="Han C.S."/>
            <person name="Xie G."/>
            <person name="Challacombe J.F."/>
            <person name="Altherr M.R."/>
            <person name="Bhotika S.S."/>
            <person name="Bruce D."/>
            <person name="Campbell C.S."/>
            <person name="Campbell M.L."/>
            <person name="Chen J."/>
            <person name="Chertkov O."/>
            <person name="Cleland C."/>
            <person name="Dimitrijevic M."/>
            <person name="Doggett N.A."/>
            <person name="Fawcett J.J."/>
            <person name="Glavina T."/>
            <person name="Goodwin L.A."/>
            <person name="Hill K.K."/>
            <person name="Hitchcock P."/>
            <person name="Jackson P.J."/>
            <person name="Keim P."/>
            <person name="Kewalramani A.R."/>
            <person name="Longmire J."/>
            <person name="Lucas S."/>
            <person name="Malfatti S."/>
            <person name="McMurry K."/>
            <person name="Meincke L.J."/>
            <person name="Misra M."/>
            <person name="Moseman B.L."/>
            <person name="Mundt M."/>
            <person name="Munk A.C."/>
            <person name="Okinaka R.T."/>
            <person name="Parson-Quintana B."/>
            <person name="Reilly L.P."/>
            <person name="Richardson P."/>
            <person name="Robinson D.L."/>
            <person name="Rubin E."/>
            <person name="Saunders E."/>
            <person name="Tapia R."/>
            <person name="Tesmer J.G."/>
            <person name="Thayer N."/>
            <person name="Thompson L.S."/>
            <person name="Tice H."/>
            <person name="Ticknor L.O."/>
            <person name="Wills P.L."/>
            <person name="Brettin T.S."/>
            <person name="Gilna P."/>
        </authorList>
    </citation>
    <scope>NUCLEOTIDE SEQUENCE [LARGE SCALE GENOMIC DNA]</scope>
    <source>
        <strain>97-27</strain>
    </source>
</reference>
<sequence>MSRISKAEMSKLLSVYFIMGSNNCTKDPLQVLREALEGGITIFQFREKGEGALTGEERICFAKELQAICKEYGVPFIVNDDVELALELDADGVHVGQDDEGITSVREKMGDKIVGVSTHTIEEARWAIENGADYLGVGPIFPTSTKKDTKAVQGTKGLAHFREQGITIPIVGIGGISIENTALVIEAGADGVSVISAISLAESAYESTKKLVEEVSRSL</sequence>
<keyword id="KW-0460">Magnesium</keyword>
<keyword id="KW-0479">Metal-binding</keyword>
<keyword id="KW-0784">Thiamine biosynthesis</keyword>
<keyword id="KW-0808">Transferase</keyword>
<evidence type="ECO:0000255" key="1">
    <source>
        <dbReference type="HAMAP-Rule" id="MF_00097"/>
    </source>
</evidence>
<accession>Q6HP17</accession>
<comment type="function">
    <text evidence="1">Condenses 4-methyl-5-(beta-hydroxyethyl)thiazole monophosphate (THZ-P) and 2-methyl-4-amino-5-hydroxymethyl pyrimidine pyrophosphate (HMP-PP) to form thiamine monophosphate (TMP).</text>
</comment>
<comment type="catalytic activity">
    <reaction evidence="1">
        <text>2-[(2R,5Z)-2-carboxy-4-methylthiazol-5(2H)-ylidene]ethyl phosphate + 4-amino-2-methyl-5-(diphosphooxymethyl)pyrimidine + 2 H(+) = thiamine phosphate + CO2 + diphosphate</text>
        <dbReference type="Rhea" id="RHEA:47844"/>
        <dbReference type="ChEBI" id="CHEBI:15378"/>
        <dbReference type="ChEBI" id="CHEBI:16526"/>
        <dbReference type="ChEBI" id="CHEBI:33019"/>
        <dbReference type="ChEBI" id="CHEBI:37575"/>
        <dbReference type="ChEBI" id="CHEBI:57841"/>
        <dbReference type="ChEBI" id="CHEBI:62899"/>
        <dbReference type="EC" id="2.5.1.3"/>
    </reaction>
</comment>
<comment type="catalytic activity">
    <reaction evidence="1">
        <text>2-(2-carboxy-4-methylthiazol-5-yl)ethyl phosphate + 4-amino-2-methyl-5-(diphosphooxymethyl)pyrimidine + 2 H(+) = thiamine phosphate + CO2 + diphosphate</text>
        <dbReference type="Rhea" id="RHEA:47848"/>
        <dbReference type="ChEBI" id="CHEBI:15378"/>
        <dbReference type="ChEBI" id="CHEBI:16526"/>
        <dbReference type="ChEBI" id="CHEBI:33019"/>
        <dbReference type="ChEBI" id="CHEBI:37575"/>
        <dbReference type="ChEBI" id="CHEBI:57841"/>
        <dbReference type="ChEBI" id="CHEBI:62890"/>
        <dbReference type="EC" id="2.5.1.3"/>
    </reaction>
</comment>
<comment type="catalytic activity">
    <reaction evidence="1">
        <text>4-methyl-5-(2-phosphooxyethyl)-thiazole + 4-amino-2-methyl-5-(diphosphooxymethyl)pyrimidine + H(+) = thiamine phosphate + diphosphate</text>
        <dbReference type="Rhea" id="RHEA:22328"/>
        <dbReference type="ChEBI" id="CHEBI:15378"/>
        <dbReference type="ChEBI" id="CHEBI:33019"/>
        <dbReference type="ChEBI" id="CHEBI:37575"/>
        <dbReference type="ChEBI" id="CHEBI:57841"/>
        <dbReference type="ChEBI" id="CHEBI:58296"/>
        <dbReference type="EC" id="2.5.1.3"/>
    </reaction>
</comment>
<comment type="cofactor">
    <cofactor evidence="1">
        <name>Mg(2+)</name>
        <dbReference type="ChEBI" id="CHEBI:18420"/>
    </cofactor>
    <text evidence="1">Binds 1 Mg(2+) ion per subunit.</text>
</comment>
<comment type="pathway">
    <text evidence="1">Cofactor biosynthesis; thiamine diphosphate biosynthesis; thiamine phosphate from 4-amino-2-methyl-5-diphosphomethylpyrimidine and 4-methyl-5-(2-phosphoethyl)-thiazole: step 1/1.</text>
</comment>
<comment type="similarity">
    <text evidence="1">Belongs to the thiamine-phosphate synthase family.</text>
</comment>
<protein>
    <recommendedName>
        <fullName evidence="1">Thiamine-phosphate synthase</fullName>
        <shortName evidence="1">TP synthase</shortName>
        <shortName evidence="1">TPS</shortName>
        <ecNumber evidence="1">2.5.1.3</ecNumber>
    </recommendedName>
    <alternativeName>
        <fullName evidence="1">Thiamine-phosphate pyrophosphorylase</fullName>
        <shortName evidence="1">TMP pyrophosphorylase</shortName>
        <shortName evidence="1">TMP-PPase</shortName>
    </alternativeName>
</protein>